<feature type="chain" id="PRO_1000196530" description="Small ribosomal subunit protein bS18">
    <location>
        <begin position="1"/>
        <end position="79"/>
    </location>
</feature>
<protein>
    <recommendedName>
        <fullName evidence="1">Small ribosomal subunit protein bS18</fullName>
    </recommendedName>
    <alternativeName>
        <fullName evidence="2">30S ribosomal protein S18</fullName>
    </alternativeName>
</protein>
<comment type="function">
    <text evidence="1">Binds as a heterodimer with protein bS6 to the central domain of the 16S rRNA, where it helps stabilize the platform of the 30S subunit.</text>
</comment>
<comment type="subunit">
    <text evidence="1">Part of the 30S ribosomal subunit. Forms a tight heterodimer with protein bS6.</text>
</comment>
<comment type="similarity">
    <text evidence="1">Belongs to the bacterial ribosomal protein bS18 family.</text>
</comment>
<sequence>MAQQRRGGFKRRKKVDFIAANKIEYVDYKDTELLSRFVSERGKILPRRVTGTSAKNQRKVTTAIKRARVMALMPYVNED</sequence>
<dbReference type="EMBL" id="FM204883">
    <property type="protein sequence ID" value="CAW92568.1"/>
    <property type="molecule type" value="Genomic_DNA"/>
</dbReference>
<dbReference type="RefSeq" id="WP_002983142.1">
    <property type="nucleotide sequence ID" value="NC_012471.1"/>
</dbReference>
<dbReference type="SMR" id="C0MB81"/>
<dbReference type="GeneID" id="93826879"/>
<dbReference type="KEGG" id="seu:SEQ_0410"/>
<dbReference type="HOGENOM" id="CLU_148710_2_2_9"/>
<dbReference type="OrthoDB" id="9812008at2"/>
<dbReference type="Proteomes" id="UP000001365">
    <property type="component" value="Chromosome"/>
</dbReference>
<dbReference type="GO" id="GO:0022627">
    <property type="term" value="C:cytosolic small ribosomal subunit"/>
    <property type="evidence" value="ECO:0007669"/>
    <property type="project" value="TreeGrafter"/>
</dbReference>
<dbReference type="GO" id="GO:0070181">
    <property type="term" value="F:small ribosomal subunit rRNA binding"/>
    <property type="evidence" value="ECO:0007669"/>
    <property type="project" value="TreeGrafter"/>
</dbReference>
<dbReference type="GO" id="GO:0003735">
    <property type="term" value="F:structural constituent of ribosome"/>
    <property type="evidence" value="ECO:0007669"/>
    <property type="project" value="InterPro"/>
</dbReference>
<dbReference type="GO" id="GO:0006412">
    <property type="term" value="P:translation"/>
    <property type="evidence" value="ECO:0007669"/>
    <property type="project" value="UniProtKB-UniRule"/>
</dbReference>
<dbReference type="FunFam" id="4.10.640.10:FF:000003">
    <property type="entry name" value="30S ribosomal protein S18"/>
    <property type="match status" value="1"/>
</dbReference>
<dbReference type="Gene3D" id="4.10.640.10">
    <property type="entry name" value="Ribosomal protein S18"/>
    <property type="match status" value="1"/>
</dbReference>
<dbReference type="HAMAP" id="MF_00270">
    <property type="entry name" value="Ribosomal_bS18"/>
    <property type="match status" value="1"/>
</dbReference>
<dbReference type="InterPro" id="IPR001648">
    <property type="entry name" value="Ribosomal_bS18"/>
</dbReference>
<dbReference type="InterPro" id="IPR018275">
    <property type="entry name" value="Ribosomal_bS18_CS"/>
</dbReference>
<dbReference type="InterPro" id="IPR036870">
    <property type="entry name" value="Ribosomal_bS18_sf"/>
</dbReference>
<dbReference type="NCBIfam" id="TIGR00165">
    <property type="entry name" value="S18"/>
    <property type="match status" value="1"/>
</dbReference>
<dbReference type="PANTHER" id="PTHR13479">
    <property type="entry name" value="30S RIBOSOMAL PROTEIN S18"/>
    <property type="match status" value="1"/>
</dbReference>
<dbReference type="PANTHER" id="PTHR13479:SF40">
    <property type="entry name" value="SMALL RIBOSOMAL SUBUNIT PROTEIN BS18M"/>
    <property type="match status" value="1"/>
</dbReference>
<dbReference type="Pfam" id="PF01084">
    <property type="entry name" value="Ribosomal_S18"/>
    <property type="match status" value="1"/>
</dbReference>
<dbReference type="PRINTS" id="PR00974">
    <property type="entry name" value="RIBOSOMALS18"/>
</dbReference>
<dbReference type="SUPFAM" id="SSF46911">
    <property type="entry name" value="Ribosomal protein S18"/>
    <property type="match status" value="1"/>
</dbReference>
<dbReference type="PROSITE" id="PS00057">
    <property type="entry name" value="RIBOSOMAL_S18"/>
    <property type="match status" value="1"/>
</dbReference>
<accession>C0MB81</accession>
<name>RS18_STRE4</name>
<reference key="1">
    <citation type="journal article" date="2009" name="PLoS Pathog.">
        <title>Genomic evidence for the evolution of Streptococcus equi: host restriction, increased virulence, and genetic exchange with human pathogens.</title>
        <authorList>
            <person name="Holden M.T.G."/>
            <person name="Heather Z."/>
            <person name="Paillot R."/>
            <person name="Steward K.F."/>
            <person name="Webb K."/>
            <person name="Ainslie F."/>
            <person name="Jourdan T."/>
            <person name="Bason N.C."/>
            <person name="Holroyd N.E."/>
            <person name="Mungall K."/>
            <person name="Quail M.A."/>
            <person name="Sanders M."/>
            <person name="Simmonds M."/>
            <person name="Willey D."/>
            <person name="Brooks K."/>
            <person name="Aanensen D.M."/>
            <person name="Spratt B.G."/>
            <person name="Jolley K.A."/>
            <person name="Maiden M.C.J."/>
            <person name="Kehoe M."/>
            <person name="Chanter N."/>
            <person name="Bentley S.D."/>
            <person name="Robinson C."/>
            <person name="Maskell D.J."/>
            <person name="Parkhill J."/>
            <person name="Waller A.S."/>
        </authorList>
    </citation>
    <scope>NUCLEOTIDE SEQUENCE [LARGE SCALE GENOMIC DNA]</scope>
    <source>
        <strain>4047</strain>
    </source>
</reference>
<evidence type="ECO:0000255" key="1">
    <source>
        <dbReference type="HAMAP-Rule" id="MF_00270"/>
    </source>
</evidence>
<evidence type="ECO:0000305" key="2"/>
<keyword id="KW-0687">Ribonucleoprotein</keyword>
<keyword id="KW-0689">Ribosomal protein</keyword>
<keyword id="KW-0694">RNA-binding</keyword>
<keyword id="KW-0699">rRNA-binding</keyword>
<proteinExistence type="inferred from homology"/>
<organism>
    <name type="scientific">Streptococcus equi subsp. equi (strain 4047)</name>
    <dbReference type="NCBI Taxonomy" id="553482"/>
    <lineage>
        <taxon>Bacteria</taxon>
        <taxon>Bacillati</taxon>
        <taxon>Bacillota</taxon>
        <taxon>Bacilli</taxon>
        <taxon>Lactobacillales</taxon>
        <taxon>Streptococcaceae</taxon>
        <taxon>Streptococcus</taxon>
    </lineage>
</organism>
<gene>
    <name evidence="1" type="primary">rpsR</name>
    <name type="ordered locus">SEQ_0410</name>
</gene>